<gene>
    <name evidence="6" type="primary">GPL1</name>
    <name evidence="9" type="ordered locus">At2g25650</name>
    <name evidence="10" type="ORF">F3N11.10</name>
</gene>
<proteinExistence type="evidence at protein level"/>
<protein>
    <recommendedName>
        <fullName evidence="6">GLABROUS1 enhancer-binding protein-like 1</fullName>
    </recommendedName>
    <alternativeName>
        <fullName evidence="6">Protein GPL1</fullName>
    </alternativeName>
    <alternativeName>
        <fullName evidence="7">Storekeeper-like protein At2g25650</fullName>
    </alternativeName>
</protein>
<keyword id="KW-0175">Coiled coil</keyword>
<keyword id="KW-0539">Nucleus</keyword>
<keyword id="KW-1185">Reference proteome</keyword>
<keyword id="KW-0804">Transcription</keyword>
<keyword id="KW-0805">Transcription regulation</keyword>
<feature type="chain" id="PRO_0000436982" description="GLABROUS1 enhancer-binding protein-like 1">
    <location>
        <begin position="1"/>
        <end position="386"/>
    </location>
</feature>
<feature type="region of interest" description="Disordered" evidence="2">
    <location>
        <begin position="1"/>
        <end position="58"/>
    </location>
</feature>
<feature type="region of interest" description="Disordered" evidence="2">
    <location>
        <begin position="197"/>
        <end position="314"/>
    </location>
</feature>
<feature type="region of interest" description="Non-canonical leucine-zipper" evidence="8">
    <location>
        <begin position="354"/>
        <end position="375"/>
    </location>
</feature>
<feature type="coiled-coil region" evidence="1">
    <location>
        <begin position="221"/>
        <end position="285"/>
    </location>
</feature>
<feature type="compositionally biased region" description="Basic and acidic residues" evidence="2">
    <location>
        <begin position="216"/>
        <end position="226"/>
    </location>
</feature>
<feature type="compositionally biased region" description="Polar residues" evidence="2">
    <location>
        <begin position="257"/>
        <end position="267"/>
    </location>
</feature>
<feature type="compositionally biased region" description="Low complexity" evidence="2">
    <location>
        <begin position="291"/>
        <end position="300"/>
    </location>
</feature>
<sequence>MVTPKQIDFSSCGGGDNSDDTLSHRESPRNPSSKRAAASFAAEAGEETMKKKKKKKKKNLGPPLIVRIWNEEDELSILKGLVDYRAKTGFNPKIDWDAFYSFLGSSIVAKFSKEQVLSKIRKLKRRFHVHWEKISEGNDPKFTRSSDSEAFGFSSMIWGQGEFGNDDGMDKEMVKEHDVNGNGAAENGTARIAQENESGEEMLKEHEETLNENGAEEIRDNDETARKAQQLESESEEEMLKEHEEPFNENGAENIRDNNGTTQIAQQSESESEEMLKEHEEVANTELVNENGAAKTTENGTTGGKERHDDDDDDELCAVQDAFEAVMSQGLSGYQKKLQLEKLMNLGTGKRRELSDEWKALCVEERRLNIKKLRFSAKLAEAANDS</sequence>
<dbReference type="EMBL" id="AC006053">
    <property type="protein sequence ID" value="AAD31366.2"/>
    <property type="molecule type" value="Genomic_DNA"/>
</dbReference>
<dbReference type="EMBL" id="CP002685">
    <property type="protein sequence ID" value="AEC07730.1"/>
    <property type="molecule type" value="Genomic_DNA"/>
</dbReference>
<dbReference type="EMBL" id="AY072164">
    <property type="protein sequence ID" value="AAL59986.1"/>
    <property type="molecule type" value="mRNA"/>
</dbReference>
<dbReference type="EMBL" id="AY096417">
    <property type="protein sequence ID" value="AAM20057.1"/>
    <property type="molecule type" value="mRNA"/>
</dbReference>
<dbReference type="EMBL" id="AY084223">
    <property type="protein sequence ID" value="AAM60824.1"/>
    <property type="molecule type" value="mRNA"/>
</dbReference>
<dbReference type="PIR" id="A84651">
    <property type="entry name" value="A84651"/>
</dbReference>
<dbReference type="RefSeq" id="NP_565602.1">
    <property type="nucleotide sequence ID" value="NM_128124.3"/>
</dbReference>
<dbReference type="SMR" id="Q8VYD2"/>
<dbReference type="FunCoup" id="Q8VYD2">
    <property type="interactions" value="47"/>
</dbReference>
<dbReference type="IntAct" id="Q8VYD2">
    <property type="interactions" value="25"/>
</dbReference>
<dbReference type="STRING" id="3702.Q8VYD2"/>
<dbReference type="iPTMnet" id="Q8VYD2"/>
<dbReference type="PaxDb" id="3702-AT2G25650.1"/>
<dbReference type="ProteomicsDB" id="228418"/>
<dbReference type="EnsemblPlants" id="AT2G25650.1">
    <property type="protein sequence ID" value="AT2G25650.1"/>
    <property type="gene ID" value="AT2G25650"/>
</dbReference>
<dbReference type="GeneID" id="817106"/>
<dbReference type="Gramene" id="AT2G25650.1">
    <property type="protein sequence ID" value="AT2G25650.1"/>
    <property type="gene ID" value="AT2G25650"/>
</dbReference>
<dbReference type="KEGG" id="ath:AT2G25650"/>
<dbReference type="Araport" id="AT2G25650"/>
<dbReference type="TAIR" id="AT2G25650">
    <property type="gene designation" value="GPL1"/>
</dbReference>
<dbReference type="eggNOG" id="ENOG502R1KX">
    <property type="taxonomic scope" value="Eukaryota"/>
</dbReference>
<dbReference type="HOGENOM" id="CLU_055192_0_0_1"/>
<dbReference type="InParanoid" id="Q8VYD2"/>
<dbReference type="OMA" id="VHWEKIN"/>
<dbReference type="PhylomeDB" id="Q8VYD2"/>
<dbReference type="PRO" id="PR:Q8VYD2"/>
<dbReference type="Proteomes" id="UP000006548">
    <property type="component" value="Chromosome 2"/>
</dbReference>
<dbReference type="ExpressionAtlas" id="Q8VYD2">
    <property type="expression patterns" value="baseline and differential"/>
</dbReference>
<dbReference type="GO" id="GO:0005634">
    <property type="term" value="C:nucleus"/>
    <property type="evidence" value="ECO:0007669"/>
    <property type="project" value="UniProtKB-SubCell"/>
</dbReference>
<dbReference type="GO" id="GO:0000976">
    <property type="term" value="F:transcription cis-regulatory region binding"/>
    <property type="evidence" value="ECO:0000353"/>
    <property type="project" value="TAIR"/>
</dbReference>
<dbReference type="GO" id="GO:0006355">
    <property type="term" value="P:regulation of DNA-templated transcription"/>
    <property type="evidence" value="ECO:0000304"/>
    <property type="project" value="TAIR"/>
</dbReference>
<dbReference type="InterPro" id="IPR007592">
    <property type="entry name" value="GEBP"/>
</dbReference>
<dbReference type="InterPro" id="IPR053932">
    <property type="entry name" value="GeBP-like_DBD"/>
</dbReference>
<dbReference type="PANTHER" id="PTHR31662">
    <property type="entry name" value="BNAANNG10740D PROTEIN-RELATED"/>
    <property type="match status" value="1"/>
</dbReference>
<dbReference type="PANTHER" id="PTHR31662:SF49">
    <property type="entry name" value="GLABROUS1 ENHANCER-BINDING PROTEIN-RELATED"/>
    <property type="match status" value="1"/>
</dbReference>
<dbReference type="Pfam" id="PF04504">
    <property type="entry name" value="GeBP-like_DBD"/>
    <property type="match status" value="1"/>
</dbReference>
<accession>Q8VYD2</accession>
<accession>Q9SL98</accession>
<organism>
    <name type="scientific">Arabidopsis thaliana</name>
    <name type="common">Mouse-ear cress</name>
    <dbReference type="NCBI Taxonomy" id="3702"/>
    <lineage>
        <taxon>Eukaryota</taxon>
        <taxon>Viridiplantae</taxon>
        <taxon>Streptophyta</taxon>
        <taxon>Embryophyta</taxon>
        <taxon>Tracheophyta</taxon>
        <taxon>Spermatophyta</taxon>
        <taxon>Magnoliopsida</taxon>
        <taxon>eudicotyledons</taxon>
        <taxon>Gunneridae</taxon>
        <taxon>Pentapetalae</taxon>
        <taxon>rosids</taxon>
        <taxon>malvids</taxon>
        <taxon>Brassicales</taxon>
        <taxon>Brassicaceae</taxon>
        <taxon>Camelineae</taxon>
        <taxon>Arabidopsis</taxon>
    </lineage>
</organism>
<name>STKLH_ARATH</name>
<comment type="function">
    <text evidence="4 8">Probable transcription factor. May play redundant roles with GEBP and GPL2 in cytokinin responses by regulating the transcript levels of type-A ARR response genes (PubMed:18162594). Involved in stress responses (PubMed:21875893). Plays a repressive role in cell expansion by counteracting the positive role of CPR5 in this process, but does not regulate cell proliferation or endoreduplication (PubMed:21875893).</text>
</comment>
<comment type="subunit">
    <text evidence="3 5">Homo- and heterodimers. Interacts with GEBP, GPL2 and GPL3. Interacts with GEBP (PubMed:29192025).</text>
</comment>
<comment type="interaction">
    <interactant intactId="EBI-4426914">
        <id>Q8VYD2</id>
    </interactant>
    <interactant intactId="EBI-1100737">
        <id>Q8L9Y3</id>
        <label>ARR14</label>
    </interactant>
    <organismsDiffer>false</organismsDiffer>
    <experiments>3</experiments>
</comment>
<comment type="interaction">
    <interactant intactId="EBI-4426914">
        <id>Q8VYD2</id>
    </interactant>
    <interactant intactId="EBI-15199331">
        <id>Q9SJM4</id>
        <label>GPL3</label>
    </interactant>
    <organismsDiffer>false</organismsDiffer>
    <experiments>3</experiments>
</comment>
<comment type="interaction">
    <interactant intactId="EBI-4426914">
        <id>Q8VYD2</id>
    </interactant>
    <interactant intactId="EBI-15191543">
        <id>Q05153</id>
        <label>SSRP1</label>
    </interactant>
    <organismsDiffer>false</organismsDiffer>
    <experiments>4</experiments>
</comment>
<comment type="interaction">
    <interactant intactId="EBI-4426914">
        <id>Q8VYD2</id>
    </interactant>
    <interactant intactId="EBI-1102271">
        <id>Q84JG2</id>
        <label>SWI3B</label>
    </interactant>
    <organismsDiffer>false</organismsDiffer>
    <experiments>3</experiments>
</comment>
<comment type="interaction">
    <interactant intactId="EBI-4426914">
        <id>Q8VYD2</id>
    </interactant>
    <interactant intactId="EBI-541307">
        <id>P43273</id>
        <label>TGA2</label>
    </interactant>
    <organismsDiffer>false</organismsDiffer>
    <experiments>6</experiments>
</comment>
<comment type="subcellular location">
    <subcellularLocation>
        <location evidence="3">Nucleus</location>
    </subcellularLocation>
</comment>
<comment type="tissue specificity">
    <text evidence="3">Expressed in the apical meristem and young leaf primordia. Detected in the vascular tissues of cotyledons and leaves, in hydathodes and at the base of flowers and siliques, but not in roots.</text>
</comment>
<comment type="similarity">
    <text evidence="7">Belongs to the GeBP family.</text>
</comment>
<comment type="online information" name="Plant Transcription Factor Database">
    <link uri="https://planttfdb.gao-lab.org/family.php?fam=GeBP#family_intro"/>
</comment>
<reference key="1">
    <citation type="journal article" date="1999" name="Nature">
        <title>Sequence and analysis of chromosome 2 of the plant Arabidopsis thaliana.</title>
        <authorList>
            <person name="Lin X."/>
            <person name="Kaul S."/>
            <person name="Rounsley S.D."/>
            <person name="Shea T.P."/>
            <person name="Benito M.-I."/>
            <person name="Town C.D."/>
            <person name="Fujii C.Y."/>
            <person name="Mason T.M."/>
            <person name="Bowman C.L."/>
            <person name="Barnstead M.E."/>
            <person name="Feldblyum T.V."/>
            <person name="Buell C.R."/>
            <person name="Ketchum K.A."/>
            <person name="Lee J.J."/>
            <person name="Ronning C.M."/>
            <person name="Koo H.L."/>
            <person name="Moffat K.S."/>
            <person name="Cronin L.A."/>
            <person name="Shen M."/>
            <person name="Pai G."/>
            <person name="Van Aken S."/>
            <person name="Umayam L."/>
            <person name="Tallon L.J."/>
            <person name="Gill J.E."/>
            <person name="Adams M.D."/>
            <person name="Carrera A.J."/>
            <person name="Creasy T.H."/>
            <person name="Goodman H.M."/>
            <person name="Somerville C.R."/>
            <person name="Copenhaver G.P."/>
            <person name="Preuss D."/>
            <person name="Nierman W.C."/>
            <person name="White O."/>
            <person name="Eisen J.A."/>
            <person name="Salzberg S.L."/>
            <person name="Fraser C.M."/>
            <person name="Venter J.C."/>
        </authorList>
    </citation>
    <scope>NUCLEOTIDE SEQUENCE [LARGE SCALE GENOMIC DNA]</scope>
    <source>
        <strain>cv. Columbia</strain>
    </source>
</reference>
<reference key="2">
    <citation type="journal article" date="2017" name="Plant J.">
        <title>Araport11: a complete reannotation of the Arabidopsis thaliana reference genome.</title>
        <authorList>
            <person name="Cheng C.Y."/>
            <person name="Krishnakumar V."/>
            <person name="Chan A.P."/>
            <person name="Thibaud-Nissen F."/>
            <person name="Schobel S."/>
            <person name="Town C.D."/>
        </authorList>
    </citation>
    <scope>GENOME REANNOTATION</scope>
    <source>
        <strain>cv. Columbia</strain>
    </source>
</reference>
<reference key="3">
    <citation type="journal article" date="2003" name="Science">
        <title>Empirical analysis of transcriptional activity in the Arabidopsis genome.</title>
        <authorList>
            <person name="Yamada K."/>
            <person name="Lim J."/>
            <person name="Dale J.M."/>
            <person name="Chen H."/>
            <person name="Shinn P."/>
            <person name="Palm C.J."/>
            <person name="Southwick A.M."/>
            <person name="Wu H.C."/>
            <person name="Kim C.J."/>
            <person name="Nguyen M."/>
            <person name="Pham P.K."/>
            <person name="Cheuk R.F."/>
            <person name="Karlin-Newmann G."/>
            <person name="Liu S.X."/>
            <person name="Lam B."/>
            <person name="Sakano H."/>
            <person name="Wu T."/>
            <person name="Yu G."/>
            <person name="Miranda M."/>
            <person name="Quach H.L."/>
            <person name="Tripp M."/>
            <person name="Chang C.H."/>
            <person name="Lee J.M."/>
            <person name="Toriumi M.J."/>
            <person name="Chan M.M."/>
            <person name="Tang C.C."/>
            <person name="Onodera C.S."/>
            <person name="Deng J.M."/>
            <person name="Akiyama K."/>
            <person name="Ansari Y."/>
            <person name="Arakawa T."/>
            <person name="Banh J."/>
            <person name="Banno F."/>
            <person name="Bowser L."/>
            <person name="Brooks S.Y."/>
            <person name="Carninci P."/>
            <person name="Chao Q."/>
            <person name="Choy N."/>
            <person name="Enju A."/>
            <person name="Goldsmith A.D."/>
            <person name="Gurjal M."/>
            <person name="Hansen N.F."/>
            <person name="Hayashizaki Y."/>
            <person name="Johnson-Hopson C."/>
            <person name="Hsuan V.W."/>
            <person name="Iida K."/>
            <person name="Karnes M."/>
            <person name="Khan S."/>
            <person name="Koesema E."/>
            <person name="Ishida J."/>
            <person name="Jiang P.X."/>
            <person name="Jones T."/>
            <person name="Kawai J."/>
            <person name="Kamiya A."/>
            <person name="Meyers C."/>
            <person name="Nakajima M."/>
            <person name="Narusaka M."/>
            <person name="Seki M."/>
            <person name="Sakurai T."/>
            <person name="Satou M."/>
            <person name="Tamse R."/>
            <person name="Vaysberg M."/>
            <person name="Wallender E.K."/>
            <person name="Wong C."/>
            <person name="Yamamura Y."/>
            <person name="Yuan S."/>
            <person name="Shinozaki K."/>
            <person name="Davis R.W."/>
            <person name="Theologis A."/>
            <person name="Ecker J.R."/>
        </authorList>
    </citation>
    <scope>NUCLEOTIDE SEQUENCE [LARGE SCALE MRNA]</scope>
    <source>
        <strain>cv. Columbia</strain>
    </source>
</reference>
<reference key="4">
    <citation type="submission" date="2002-03" db="EMBL/GenBank/DDBJ databases">
        <title>Full-length cDNA from Arabidopsis thaliana.</title>
        <authorList>
            <person name="Brover V.V."/>
            <person name="Troukhan M.E."/>
            <person name="Alexandrov N.A."/>
            <person name="Lu Y.-P."/>
            <person name="Flavell R.B."/>
            <person name="Feldmann K.A."/>
        </authorList>
    </citation>
    <scope>NUCLEOTIDE SEQUENCE [LARGE SCALE MRNA]</scope>
</reference>
<reference key="5">
    <citation type="journal article" date="2003" name="Plant J.">
        <title>GeBP, the first member of a new gene family in Arabidopsis, encodes a nuclear protein with DNA-binding activity and is regulated by KNAT1.</title>
        <authorList>
            <person name="Curaba J."/>
            <person name="Herzog M."/>
            <person name="Vachon G."/>
        </authorList>
    </citation>
    <scope>GENE FAMILY</scope>
</reference>
<reference key="6">
    <citation type="journal article" date="2008" name="Plant Physiol.">
        <title>GeBP and GeBP-like proteins are noncanonical leucine-zipper transcription factors that regulate cytokinin response in Arabidopsis.</title>
        <authorList>
            <person name="Chevalier F."/>
            <person name="Perazza D."/>
            <person name="Laporte F."/>
            <person name="Le Henanff G."/>
            <person name="Hornitschek P."/>
            <person name="Bonneville J.M."/>
            <person name="Herzog M."/>
            <person name="Vachon G."/>
        </authorList>
    </citation>
    <scope>INTERACTION WITH GEBP; GPL2 AND GPL3</scope>
    <scope>SUBUNIT</scope>
    <scope>SUBCELLULAR LOCATION</scope>
    <scope>TISSUE SPECIFICITY</scope>
</reference>
<reference key="7">
    <citation type="journal article" date="2011" name="Plant Physiol.">
        <title>GeBP/GPL transcription factors regulate a subset of CPR5-dependent processes.</title>
        <authorList>
            <person name="Perazza D."/>
            <person name="Laporte F."/>
            <person name="Balague C."/>
            <person name="Chevalier F."/>
            <person name="Remo S."/>
            <person name="Bourge M."/>
            <person name="Larkin J."/>
            <person name="Herzog M."/>
            <person name="Vachon G."/>
        </authorList>
    </citation>
    <scope>FUNCTION</scope>
</reference>
<reference key="8">
    <citation type="journal article" date="2018" name="Plant Physiol.">
        <title>STOREKEEPER RELATED1/G-element binding protein (STKR1) interacts with protein kinase SnRK1.</title>
        <authorList>
            <person name="Nietzsche M."/>
            <person name="Guerra T."/>
            <person name="Alseekh S."/>
            <person name="Wiermer M."/>
            <person name="Sonnewald S."/>
            <person name="Fernie A.R."/>
            <person name="Boernke F."/>
        </authorList>
    </citation>
    <scope>INTERACTION WITH GEBP</scope>
</reference>
<evidence type="ECO:0000255" key="1"/>
<evidence type="ECO:0000256" key="2">
    <source>
        <dbReference type="SAM" id="MobiDB-lite"/>
    </source>
</evidence>
<evidence type="ECO:0000269" key="3">
    <source>
    </source>
</evidence>
<evidence type="ECO:0000269" key="4">
    <source>
    </source>
</evidence>
<evidence type="ECO:0000269" key="5">
    <source>
    </source>
</evidence>
<evidence type="ECO:0000303" key="6">
    <source>
    </source>
</evidence>
<evidence type="ECO:0000305" key="7"/>
<evidence type="ECO:0000305" key="8">
    <source>
    </source>
</evidence>
<evidence type="ECO:0000312" key="9">
    <source>
        <dbReference type="Araport" id="AT2G25650"/>
    </source>
</evidence>
<evidence type="ECO:0000312" key="10">
    <source>
        <dbReference type="EMBL" id="AAD31366.2"/>
    </source>
</evidence>